<accession>B5YY42</accession>
<sequence>MSLLQFSGLFVVWLLCTLFIATLTWFEFRRVRFNFNVFFSLLFLLTFFFGFPLTSVLVFRFDVGVAPPEILLQALLSAGCFYAVYYVTYKTRLRKRVADVPRRPLFTMNRVETNLTWVILMGIALVSVGIFFMHNGFLLFRLNSYSQIFSSEVSGVALKRFFYFFIPAMLVVYFLRQDSKAWLFFLVSTVAFGLLTYMIVGGTRANIIIAFAIFLFIGIIRGWISLWMLAAAGVLGIVGMFWLALKRYGMNVSGDEAFYTFLYLTRDTFSPWENLALLLQNYDNIDFQGLAPIVRDFYVFIPSWLWPGRPSMVLNSANYFTWEVLNNHSGLAISPTLIGSLVVMGGALFIPLGAIVVGLIIKWFDWLYELGNRETNRYKAAILHSFCFGAIFNMIVLAREGLDSFVSRVVFFIVVFGACLMIAKLLYWLFESAGLIHKRTKSSLRTQVEG</sequence>
<reference key="1">
    <citation type="journal article" date="2011" name="Proc. Natl. Acad. Sci. U.S.A.">
        <title>Genomic anatomy of Escherichia coli O157:H7 outbreaks.</title>
        <authorList>
            <person name="Eppinger M."/>
            <person name="Mammel M.K."/>
            <person name="Leclerc J.E."/>
            <person name="Ravel J."/>
            <person name="Cebula T.A."/>
        </authorList>
    </citation>
    <scope>NUCLEOTIDE SEQUENCE [LARGE SCALE GENOMIC DNA]</scope>
    <source>
        <strain>EC4115 / EHEC</strain>
    </source>
</reference>
<gene>
    <name evidence="1" type="primary">wzyE</name>
    <name type="ordered locus">ECH74115_5227</name>
</gene>
<comment type="function">
    <text evidence="1">Probably involved in the polymerization of enterobacterial common antigen (ECA) trisaccharide repeat units.</text>
</comment>
<comment type="pathway">
    <text evidence="1">Bacterial outer membrane biogenesis; enterobacterial common antigen biosynthesis.</text>
</comment>
<comment type="subunit">
    <text evidence="1">Probably part of a complex composed of WzxE, WzyE and WzzE.</text>
</comment>
<comment type="subcellular location">
    <subcellularLocation>
        <location evidence="1">Cell inner membrane</location>
        <topology evidence="1">Multi-pass membrane protein</topology>
    </subcellularLocation>
</comment>
<comment type="similarity">
    <text evidence="1">Belongs to the WzyE family.</text>
</comment>
<evidence type="ECO:0000255" key="1">
    <source>
        <dbReference type="HAMAP-Rule" id="MF_01003"/>
    </source>
</evidence>
<organism>
    <name type="scientific">Escherichia coli O157:H7 (strain EC4115 / EHEC)</name>
    <dbReference type="NCBI Taxonomy" id="444450"/>
    <lineage>
        <taxon>Bacteria</taxon>
        <taxon>Pseudomonadati</taxon>
        <taxon>Pseudomonadota</taxon>
        <taxon>Gammaproteobacteria</taxon>
        <taxon>Enterobacterales</taxon>
        <taxon>Enterobacteriaceae</taxon>
        <taxon>Escherichia</taxon>
    </lineage>
</organism>
<dbReference type="EMBL" id="CP001164">
    <property type="protein sequence ID" value="ACI36678.1"/>
    <property type="molecule type" value="Genomic_DNA"/>
</dbReference>
<dbReference type="RefSeq" id="WP_000055132.1">
    <property type="nucleotide sequence ID" value="NC_011353.1"/>
</dbReference>
<dbReference type="GeneID" id="75204784"/>
<dbReference type="KEGG" id="ecf:ECH74115_5227"/>
<dbReference type="HOGENOM" id="CLU_049711_0_0_6"/>
<dbReference type="UniPathway" id="UPA00566"/>
<dbReference type="GO" id="GO:0005886">
    <property type="term" value="C:plasma membrane"/>
    <property type="evidence" value="ECO:0007669"/>
    <property type="project" value="UniProtKB-SubCell"/>
</dbReference>
<dbReference type="GO" id="GO:0009246">
    <property type="term" value="P:enterobacterial common antigen biosynthetic process"/>
    <property type="evidence" value="ECO:0007669"/>
    <property type="project" value="UniProtKB-UniRule"/>
</dbReference>
<dbReference type="HAMAP" id="MF_01003">
    <property type="entry name" value="WzyE"/>
    <property type="match status" value="1"/>
</dbReference>
<dbReference type="InterPro" id="IPR010691">
    <property type="entry name" value="WzyE"/>
</dbReference>
<dbReference type="NCBIfam" id="NF002820">
    <property type="entry name" value="PRK02975.1"/>
    <property type="match status" value="1"/>
</dbReference>
<dbReference type="Pfam" id="PF06899">
    <property type="entry name" value="WzyE"/>
    <property type="match status" value="1"/>
</dbReference>
<feature type="chain" id="PRO_1000200206" description="Probable ECA polymerase">
    <location>
        <begin position="1"/>
        <end position="450"/>
    </location>
</feature>
<feature type="transmembrane region" description="Helical" evidence="1">
    <location>
        <begin position="6"/>
        <end position="26"/>
    </location>
</feature>
<feature type="transmembrane region" description="Helical" evidence="1">
    <location>
        <begin position="37"/>
        <end position="57"/>
    </location>
</feature>
<feature type="transmembrane region" description="Helical" evidence="1">
    <location>
        <begin position="63"/>
        <end position="83"/>
    </location>
</feature>
<feature type="transmembrane region" description="Helical" evidence="1">
    <location>
        <begin position="118"/>
        <end position="138"/>
    </location>
</feature>
<feature type="transmembrane region" description="Helical" evidence="1">
    <location>
        <begin position="155"/>
        <end position="175"/>
    </location>
</feature>
<feature type="transmembrane region" description="Helical" evidence="1">
    <location>
        <begin position="181"/>
        <end position="201"/>
    </location>
</feature>
<feature type="transmembrane region" description="Helical" evidence="1">
    <location>
        <begin position="207"/>
        <end position="227"/>
    </location>
</feature>
<feature type="transmembrane region" description="Helical" evidence="1">
    <location>
        <begin position="228"/>
        <end position="248"/>
    </location>
</feature>
<feature type="transmembrane region" description="Helical" evidence="1">
    <location>
        <begin position="341"/>
        <end position="361"/>
    </location>
</feature>
<feature type="transmembrane region" description="Helical" evidence="1">
    <location>
        <begin position="378"/>
        <end position="398"/>
    </location>
</feature>
<feature type="transmembrane region" description="Helical" evidence="1">
    <location>
        <begin position="410"/>
        <end position="430"/>
    </location>
</feature>
<protein>
    <recommendedName>
        <fullName evidence="1">Probable ECA polymerase</fullName>
    </recommendedName>
</protein>
<keyword id="KW-0997">Cell inner membrane</keyword>
<keyword id="KW-1003">Cell membrane</keyword>
<keyword id="KW-0472">Membrane</keyword>
<keyword id="KW-0812">Transmembrane</keyword>
<keyword id="KW-1133">Transmembrane helix</keyword>
<proteinExistence type="inferred from homology"/>
<name>WZYE_ECO5E</name>